<keyword id="KW-0067">ATP-binding</keyword>
<keyword id="KW-0227">DNA damage</keyword>
<keyword id="KW-0234">DNA repair</keyword>
<keyword id="KW-0238">DNA-binding</keyword>
<keyword id="KW-0547">Nucleotide-binding</keyword>
<name>MUTS_SHEB8</name>
<protein>
    <recommendedName>
        <fullName evidence="1">DNA mismatch repair protein MutS</fullName>
    </recommendedName>
</protein>
<dbReference type="EMBL" id="CP000753">
    <property type="protein sequence ID" value="ABS09258.1"/>
    <property type="molecule type" value="Genomic_DNA"/>
</dbReference>
<dbReference type="RefSeq" id="WP_012089807.1">
    <property type="nucleotide sequence ID" value="NC_009665.1"/>
</dbReference>
<dbReference type="SMR" id="A6WR19"/>
<dbReference type="KEGG" id="sbm:Shew185_3127"/>
<dbReference type="HOGENOM" id="CLU_002472_4_0_6"/>
<dbReference type="GO" id="GO:0005829">
    <property type="term" value="C:cytosol"/>
    <property type="evidence" value="ECO:0007669"/>
    <property type="project" value="TreeGrafter"/>
</dbReference>
<dbReference type="GO" id="GO:0005524">
    <property type="term" value="F:ATP binding"/>
    <property type="evidence" value="ECO:0007669"/>
    <property type="project" value="UniProtKB-UniRule"/>
</dbReference>
<dbReference type="GO" id="GO:0140664">
    <property type="term" value="F:ATP-dependent DNA damage sensor activity"/>
    <property type="evidence" value="ECO:0007669"/>
    <property type="project" value="InterPro"/>
</dbReference>
<dbReference type="GO" id="GO:0003684">
    <property type="term" value="F:damaged DNA binding"/>
    <property type="evidence" value="ECO:0007669"/>
    <property type="project" value="UniProtKB-UniRule"/>
</dbReference>
<dbReference type="GO" id="GO:0030983">
    <property type="term" value="F:mismatched DNA binding"/>
    <property type="evidence" value="ECO:0007669"/>
    <property type="project" value="InterPro"/>
</dbReference>
<dbReference type="GO" id="GO:0006298">
    <property type="term" value="P:mismatch repair"/>
    <property type="evidence" value="ECO:0007669"/>
    <property type="project" value="UniProtKB-UniRule"/>
</dbReference>
<dbReference type="CDD" id="cd03284">
    <property type="entry name" value="ABC_MutS1"/>
    <property type="match status" value="1"/>
</dbReference>
<dbReference type="FunFam" id="1.10.1420.10:FF:000002">
    <property type="entry name" value="DNA mismatch repair protein MutS"/>
    <property type="match status" value="1"/>
</dbReference>
<dbReference type="FunFam" id="3.30.420.110:FF:000001">
    <property type="entry name" value="DNA mismatch repair protein MutS"/>
    <property type="match status" value="1"/>
</dbReference>
<dbReference type="FunFam" id="3.40.1170.10:FF:000001">
    <property type="entry name" value="DNA mismatch repair protein MutS"/>
    <property type="match status" value="1"/>
</dbReference>
<dbReference type="FunFam" id="3.40.50.300:FF:000283">
    <property type="entry name" value="DNA mismatch repair protein MutS"/>
    <property type="match status" value="1"/>
</dbReference>
<dbReference type="Gene3D" id="1.10.1420.10">
    <property type="match status" value="2"/>
</dbReference>
<dbReference type="Gene3D" id="6.10.140.430">
    <property type="match status" value="1"/>
</dbReference>
<dbReference type="Gene3D" id="3.40.1170.10">
    <property type="entry name" value="DNA repair protein MutS, domain I"/>
    <property type="match status" value="1"/>
</dbReference>
<dbReference type="Gene3D" id="3.30.420.110">
    <property type="entry name" value="MutS, connector domain"/>
    <property type="match status" value="1"/>
</dbReference>
<dbReference type="Gene3D" id="3.40.50.300">
    <property type="entry name" value="P-loop containing nucleotide triphosphate hydrolases"/>
    <property type="match status" value="1"/>
</dbReference>
<dbReference type="HAMAP" id="MF_00096">
    <property type="entry name" value="MutS"/>
    <property type="match status" value="1"/>
</dbReference>
<dbReference type="InterPro" id="IPR005748">
    <property type="entry name" value="DNA_mismatch_repair_MutS"/>
</dbReference>
<dbReference type="InterPro" id="IPR007695">
    <property type="entry name" value="DNA_mismatch_repair_MutS-lik_N"/>
</dbReference>
<dbReference type="InterPro" id="IPR017261">
    <property type="entry name" value="DNA_mismatch_repair_MutS/MSH"/>
</dbReference>
<dbReference type="InterPro" id="IPR000432">
    <property type="entry name" value="DNA_mismatch_repair_MutS_C"/>
</dbReference>
<dbReference type="InterPro" id="IPR007861">
    <property type="entry name" value="DNA_mismatch_repair_MutS_clamp"/>
</dbReference>
<dbReference type="InterPro" id="IPR007696">
    <property type="entry name" value="DNA_mismatch_repair_MutS_core"/>
</dbReference>
<dbReference type="InterPro" id="IPR016151">
    <property type="entry name" value="DNA_mismatch_repair_MutS_N"/>
</dbReference>
<dbReference type="InterPro" id="IPR036187">
    <property type="entry name" value="DNA_mismatch_repair_MutS_sf"/>
</dbReference>
<dbReference type="InterPro" id="IPR007860">
    <property type="entry name" value="DNA_mmatch_repair_MutS_con_dom"/>
</dbReference>
<dbReference type="InterPro" id="IPR045076">
    <property type="entry name" value="MutS"/>
</dbReference>
<dbReference type="InterPro" id="IPR036678">
    <property type="entry name" value="MutS_con_dom_sf"/>
</dbReference>
<dbReference type="InterPro" id="IPR027417">
    <property type="entry name" value="P-loop_NTPase"/>
</dbReference>
<dbReference type="NCBIfam" id="TIGR01070">
    <property type="entry name" value="mutS1"/>
    <property type="match status" value="1"/>
</dbReference>
<dbReference type="NCBIfam" id="NF003810">
    <property type="entry name" value="PRK05399.1"/>
    <property type="match status" value="1"/>
</dbReference>
<dbReference type="PANTHER" id="PTHR11361:SF34">
    <property type="entry name" value="DNA MISMATCH REPAIR PROTEIN MSH1, MITOCHONDRIAL"/>
    <property type="match status" value="1"/>
</dbReference>
<dbReference type="PANTHER" id="PTHR11361">
    <property type="entry name" value="DNA MISMATCH REPAIR PROTEIN MUTS FAMILY MEMBER"/>
    <property type="match status" value="1"/>
</dbReference>
<dbReference type="Pfam" id="PF01624">
    <property type="entry name" value="MutS_I"/>
    <property type="match status" value="1"/>
</dbReference>
<dbReference type="Pfam" id="PF05188">
    <property type="entry name" value="MutS_II"/>
    <property type="match status" value="1"/>
</dbReference>
<dbReference type="Pfam" id="PF05192">
    <property type="entry name" value="MutS_III"/>
    <property type="match status" value="1"/>
</dbReference>
<dbReference type="Pfam" id="PF05190">
    <property type="entry name" value="MutS_IV"/>
    <property type="match status" value="1"/>
</dbReference>
<dbReference type="Pfam" id="PF00488">
    <property type="entry name" value="MutS_V"/>
    <property type="match status" value="1"/>
</dbReference>
<dbReference type="PIRSF" id="PIRSF037677">
    <property type="entry name" value="DNA_mis_repair_Msh6"/>
    <property type="match status" value="1"/>
</dbReference>
<dbReference type="SMART" id="SM00534">
    <property type="entry name" value="MUTSac"/>
    <property type="match status" value="1"/>
</dbReference>
<dbReference type="SMART" id="SM00533">
    <property type="entry name" value="MUTSd"/>
    <property type="match status" value="1"/>
</dbReference>
<dbReference type="SUPFAM" id="SSF55271">
    <property type="entry name" value="DNA repair protein MutS, domain I"/>
    <property type="match status" value="1"/>
</dbReference>
<dbReference type="SUPFAM" id="SSF53150">
    <property type="entry name" value="DNA repair protein MutS, domain II"/>
    <property type="match status" value="1"/>
</dbReference>
<dbReference type="SUPFAM" id="SSF48334">
    <property type="entry name" value="DNA repair protein MutS, domain III"/>
    <property type="match status" value="1"/>
</dbReference>
<dbReference type="SUPFAM" id="SSF52540">
    <property type="entry name" value="P-loop containing nucleoside triphosphate hydrolases"/>
    <property type="match status" value="1"/>
</dbReference>
<dbReference type="PROSITE" id="PS00486">
    <property type="entry name" value="DNA_MISMATCH_REPAIR_2"/>
    <property type="match status" value="1"/>
</dbReference>
<comment type="function">
    <text evidence="1">This protein is involved in the repair of mismatches in DNA. It is possible that it carries out the mismatch recognition step. This protein has a weak ATPase activity.</text>
</comment>
<comment type="similarity">
    <text evidence="1">Belongs to the DNA mismatch repair MutS family.</text>
</comment>
<organism>
    <name type="scientific">Shewanella baltica (strain OS185)</name>
    <dbReference type="NCBI Taxonomy" id="402882"/>
    <lineage>
        <taxon>Bacteria</taxon>
        <taxon>Pseudomonadati</taxon>
        <taxon>Pseudomonadota</taxon>
        <taxon>Gammaproteobacteria</taxon>
        <taxon>Alteromonadales</taxon>
        <taxon>Shewanellaceae</taxon>
        <taxon>Shewanella</taxon>
    </lineage>
</organism>
<proteinExistence type="inferred from homology"/>
<reference key="1">
    <citation type="submission" date="2007-07" db="EMBL/GenBank/DDBJ databases">
        <title>Complete sequence of chromosome of Shewanella baltica OS185.</title>
        <authorList>
            <consortium name="US DOE Joint Genome Institute"/>
            <person name="Copeland A."/>
            <person name="Lucas S."/>
            <person name="Lapidus A."/>
            <person name="Barry K."/>
            <person name="Glavina del Rio T."/>
            <person name="Dalin E."/>
            <person name="Tice H."/>
            <person name="Pitluck S."/>
            <person name="Sims D."/>
            <person name="Brettin T."/>
            <person name="Bruce D."/>
            <person name="Detter J.C."/>
            <person name="Han C."/>
            <person name="Schmutz J."/>
            <person name="Larimer F."/>
            <person name="Land M."/>
            <person name="Hauser L."/>
            <person name="Kyrpides N."/>
            <person name="Mikhailova N."/>
            <person name="Brettar I."/>
            <person name="Rodrigues J."/>
            <person name="Konstantinidis K."/>
            <person name="Tiedje J."/>
            <person name="Richardson P."/>
        </authorList>
    </citation>
    <scope>NUCLEOTIDE SEQUENCE [LARGE SCALE GENOMIC DNA]</scope>
    <source>
        <strain>OS185</strain>
    </source>
</reference>
<accession>A6WR19</accession>
<gene>
    <name evidence="1" type="primary">mutS</name>
    <name type="ordered locus">Shew185_3127</name>
</gene>
<feature type="chain" id="PRO_1000008092" description="DNA mismatch repair protein MutS">
    <location>
        <begin position="1"/>
        <end position="856"/>
    </location>
</feature>
<feature type="binding site" evidence="1">
    <location>
        <begin position="618"/>
        <end position="625"/>
    </location>
    <ligand>
        <name>ATP</name>
        <dbReference type="ChEBI" id="CHEBI:30616"/>
    </ligand>
</feature>
<sequence length="856" mass="95394">MNVIDTDDLEKHTPMMRQYLTMKAEHHDMLLFYRMGDFYELFYDDAKRASELLGISLTARGKSGGDPIPMAGLPYHAVEGYLAKLVQIGQSVAICEQIGDPATSKGPVERKVVRIVTPGTLTDEALLQERQDNLLAAVYQGKIGFGYATLDVSSGRFVIAELDTRESLEAELQRTNPVEILYSEDFGELGLLNGFKGKRRRPEWEFDYDTSIKLLLAQFGTKDLHGFGIADARLSLQAAGCLMQYVKDTQRTALPHINAITRFNQTDSIVLDAATRRNLELTQNLAGGRDNTLAAVLDNTATPMGSRMLQRWIHQPLRDPKHIKARQQAVTELLDTAAHEGLHEQLKALGDIERIMARLALRTARPRDFARLRQALGLLPELQQSLSTLSAPHTTQLRQHLGEFPAEQALLERAIVDNPPMLIRDGGVIREGYNSELDEWRGLSEGASDYLVQLEAREKERTGINTLKVGYNRVHGYYIEVSRLQSSQVPLNYQRRQTLKNMERYITPELKEYEEKVLSSQGKALALEKQLWEQLFDFILPKLHELQDFARAAAELDVLSNFAERAETLGYTCPELSQDIGVQIEAGRHPVVERVSQTPFIANPVTLHNQRRMLIVTGPNMGGKSTYMRQVALITLMAHIGCFVPADRALIGPIDRIFTRIGASDDLASGRSTFMVEMTETANILHNATASSLVLMDEIGRGTSTYDGLSLAWSAAEYLAQQVGAMTLFATHYFELTQLPELMAGVYNVHLDAIEHDDTIAFMHAVQEGAASKSYGLQVAALAGVPNKVIKAAKHKLQQLESRDHQAEGTRTPIQSLLALPEPVENPALTKLSSINPDNLTPKQALDLLYELKRLS</sequence>
<evidence type="ECO:0000255" key="1">
    <source>
        <dbReference type="HAMAP-Rule" id="MF_00096"/>
    </source>
</evidence>